<accession>P81821</accession>
<organism>
    <name type="scientific">Carcinus maenas</name>
    <name type="common">Common shore crab</name>
    <name type="synonym">Green crab</name>
    <dbReference type="NCBI Taxonomy" id="6759"/>
    <lineage>
        <taxon>Eukaryota</taxon>
        <taxon>Metazoa</taxon>
        <taxon>Ecdysozoa</taxon>
        <taxon>Arthropoda</taxon>
        <taxon>Crustacea</taxon>
        <taxon>Multicrustacea</taxon>
        <taxon>Malacostraca</taxon>
        <taxon>Eumalacostraca</taxon>
        <taxon>Eucarida</taxon>
        <taxon>Decapoda</taxon>
        <taxon>Pleocyemata</taxon>
        <taxon>Brachyura</taxon>
        <taxon>Eubrachyura</taxon>
        <taxon>Portunoidea</taxon>
        <taxon>Carcinidae</taxon>
        <taxon>Carcinus</taxon>
    </lineage>
</organism>
<dbReference type="GO" id="GO:0005576">
    <property type="term" value="C:extracellular region"/>
    <property type="evidence" value="ECO:0007669"/>
    <property type="project" value="UniProtKB-SubCell"/>
</dbReference>
<dbReference type="GO" id="GO:0007218">
    <property type="term" value="P:neuropeptide signaling pathway"/>
    <property type="evidence" value="ECO:0007669"/>
    <property type="project" value="UniProtKB-KW"/>
</dbReference>
<evidence type="ECO:0000269" key="1">
    <source>
    </source>
</evidence>
<evidence type="ECO:0000305" key="2"/>
<comment type="function">
    <text>May act as a neurotransmitter or neuromodulator.</text>
</comment>
<comment type="subcellular location">
    <subcellularLocation>
        <location>Secreted</location>
    </subcellularLocation>
</comment>
<comment type="similarity">
    <text evidence="2">Belongs to the allatostatin family.</text>
</comment>
<protein>
    <recommendedName>
        <fullName>Carcinustatin-18</fullName>
    </recommendedName>
</protein>
<proteinExistence type="evidence at protein level"/>
<keyword id="KW-0027">Amidation</keyword>
<keyword id="KW-0903">Direct protein sequencing</keyword>
<keyword id="KW-0527">Neuropeptide</keyword>
<keyword id="KW-0964">Secreted</keyword>
<sequence>SDMYSFGL</sequence>
<feature type="peptide" id="PRO_0000043473" description="Carcinustatin-18">
    <location>
        <begin position="1"/>
        <end position="8"/>
    </location>
</feature>
<feature type="modified residue" description="Leucine amide" evidence="1">
    <location>
        <position position="8"/>
    </location>
</feature>
<name>ALL18_CARMA</name>
<reference key="1">
    <citation type="journal article" date="1997" name="Eur. J. Biochem.">
        <title>Isolation and identification of multiple neuropeptides of the allatostatin superfamily in the shore crab Carcinus maenas.</title>
        <authorList>
            <person name="Duve H."/>
            <person name="Johnsen A.H."/>
            <person name="Maestro J.-L."/>
            <person name="Scott A.G."/>
            <person name="Jaros P.P."/>
            <person name="Thorpe A."/>
        </authorList>
    </citation>
    <scope>PROTEIN SEQUENCE</scope>
    <scope>AMIDATION AT LEU-8</scope>
    <source>
        <tissue>Cerebral ganglion</tissue>
        <tissue>Thoracic ganglion</tissue>
    </source>
</reference>